<evidence type="ECO:0000250" key="1">
    <source>
        <dbReference type="UniProtKB" id="Q67FW5"/>
    </source>
</evidence>
<evidence type="ECO:0000269" key="2">
    <source>
    </source>
</evidence>
<evidence type="ECO:0000303" key="3">
    <source>
    </source>
</evidence>
<evidence type="ECO:0000305" key="4"/>
<evidence type="ECO:0000312" key="5">
    <source>
        <dbReference type="RGD" id="1359497"/>
    </source>
</evidence>
<feature type="chain" id="PRO_0000289222" description="Queuosine-tRNA galactosyltransferase">
    <location>
        <begin position="1"/>
        <end position="357"/>
    </location>
</feature>
<feature type="splice variant" id="VSP_025968" description="In isoform 2." evidence="3">
    <original>E</original>
    <variation>EHRTKQTSCTDQGCGDRPSGGPQKVR</variation>
    <location>
        <position position="238"/>
    </location>
</feature>
<proteinExistence type="evidence at protein level"/>
<name>QTGAL_RAT</name>
<dbReference type="EC" id="2.4.1.-" evidence="2"/>
<dbReference type="EMBL" id="AY634365">
    <property type="protein sequence ID" value="AAT47556.1"/>
    <property type="molecule type" value="mRNA"/>
</dbReference>
<dbReference type="EMBL" id="BC111711">
    <property type="protein sequence ID" value="AAI11712.1"/>
    <property type="molecule type" value="mRNA"/>
</dbReference>
<dbReference type="RefSeq" id="NP_001015035.1">
    <molecule id="Q6GV29-1"/>
    <property type="nucleotide sequence ID" value="NM_001015035.1"/>
</dbReference>
<dbReference type="RefSeq" id="XP_008766727.1">
    <property type="nucleotide sequence ID" value="XM_008768505.2"/>
</dbReference>
<dbReference type="RefSeq" id="XP_008766729.1">
    <property type="nucleotide sequence ID" value="XM_008768507.2"/>
</dbReference>
<dbReference type="RefSeq" id="XP_008766730.1">
    <property type="nucleotide sequence ID" value="XM_008768508.2"/>
</dbReference>
<dbReference type="RefSeq" id="XP_038942443.1">
    <molecule id="Q6GV29-2"/>
    <property type="nucleotide sequence ID" value="XM_039086515.2"/>
</dbReference>
<dbReference type="RefSeq" id="XP_038942444.1">
    <molecule id="Q6GV29-2"/>
    <property type="nucleotide sequence ID" value="XM_039086516.2"/>
</dbReference>
<dbReference type="RefSeq" id="XP_038942446.1">
    <molecule id="Q6GV29-1"/>
    <property type="nucleotide sequence ID" value="XM_039086518.2"/>
</dbReference>
<dbReference type="RefSeq" id="XP_063125620.1">
    <molecule id="Q6GV29-2"/>
    <property type="nucleotide sequence ID" value="XM_063269550.1"/>
</dbReference>
<dbReference type="RefSeq" id="XP_063125621.1">
    <molecule id="Q6GV29-1"/>
    <property type="nucleotide sequence ID" value="XM_063269551.1"/>
</dbReference>
<dbReference type="SMR" id="Q6GV29"/>
<dbReference type="FunCoup" id="Q6GV29">
    <property type="interactions" value="779"/>
</dbReference>
<dbReference type="STRING" id="10116.ENSRNOP00000064695"/>
<dbReference type="CAZy" id="GT2">
    <property type="family name" value="Glycosyltransferase Family 2"/>
</dbReference>
<dbReference type="PhosphoSitePlus" id="Q6GV29"/>
<dbReference type="PaxDb" id="10116-ENSRNOP00000067846"/>
<dbReference type="Ensembl" id="ENSRNOT00000071141.3">
    <molecule id="Q6GV29-1"/>
    <property type="protein sequence ID" value="ENSRNOP00000064695.1"/>
    <property type="gene ID" value="ENSRNOG00000049724.4"/>
</dbReference>
<dbReference type="Ensembl" id="ENSRNOT00000103778.1">
    <molecule id="Q6GV29-2"/>
    <property type="protein sequence ID" value="ENSRNOP00000081528.1"/>
    <property type="gene ID" value="ENSRNOG00000049724.4"/>
</dbReference>
<dbReference type="GeneID" id="367384"/>
<dbReference type="KEGG" id="rno:367384"/>
<dbReference type="AGR" id="RGD:1359497"/>
<dbReference type="CTD" id="146712"/>
<dbReference type="RGD" id="1359497">
    <property type="gene designation" value="B3gntl1"/>
</dbReference>
<dbReference type="eggNOG" id="KOG2977">
    <property type="taxonomic scope" value="Eukaryota"/>
</dbReference>
<dbReference type="GeneTree" id="ENSGT00390000006933"/>
<dbReference type="HOGENOM" id="CLU_031597_0_0_1"/>
<dbReference type="InParanoid" id="Q6GV29"/>
<dbReference type="OMA" id="GWPEDYD"/>
<dbReference type="PhylomeDB" id="Q6GV29"/>
<dbReference type="Reactome" id="R-RNO-913709">
    <property type="pathway name" value="O-linked glycosylation of mucins"/>
</dbReference>
<dbReference type="PRO" id="PR:Q6GV29"/>
<dbReference type="Proteomes" id="UP000002494">
    <property type="component" value="Chromosome 10"/>
</dbReference>
<dbReference type="Bgee" id="ENSRNOG00000049724">
    <property type="expression patterns" value="Expressed in heart and 18 other cell types or tissues"/>
</dbReference>
<dbReference type="GO" id="GO:0005737">
    <property type="term" value="C:cytoplasm"/>
    <property type="evidence" value="ECO:0000266"/>
    <property type="project" value="RGD"/>
</dbReference>
<dbReference type="GO" id="GO:0141125">
    <property type="term" value="F:tRNA-queuosine(34) galactosyltransferase activity"/>
    <property type="evidence" value="ECO:0000314"/>
    <property type="project" value="UniProtKB"/>
</dbReference>
<dbReference type="GO" id="GO:0006417">
    <property type="term" value="P:regulation of translation"/>
    <property type="evidence" value="ECO:0000266"/>
    <property type="project" value="RGD"/>
</dbReference>
<dbReference type="GO" id="GO:0006400">
    <property type="term" value="P:tRNA modification"/>
    <property type="evidence" value="ECO:0000314"/>
    <property type="project" value="UniProtKB"/>
</dbReference>
<dbReference type="CDD" id="cd06913">
    <property type="entry name" value="beta3GnTL1_like"/>
    <property type="match status" value="1"/>
</dbReference>
<dbReference type="Gene3D" id="3.90.550.10">
    <property type="entry name" value="Spore Coat Polysaccharide Biosynthesis Protein SpsA, Chain A"/>
    <property type="match status" value="1"/>
</dbReference>
<dbReference type="InterPro" id="IPR001173">
    <property type="entry name" value="Glyco_trans_2-like"/>
</dbReference>
<dbReference type="InterPro" id="IPR029044">
    <property type="entry name" value="Nucleotide-diphossugar_trans"/>
</dbReference>
<dbReference type="PANTHER" id="PTHR22916">
    <property type="entry name" value="GLYCOSYLTRANSFERASE"/>
    <property type="match status" value="1"/>
</dbReference>
<dbReference type="PANTHER" id="PTHR22916:SF3">
    <property type="entry name" value="UDP-GLCNAC:BETAGAL BETA-1,3-N-ACETYLGLUCOSAMINYLTRANSFERASE-LIKE PROTEIN 1"/>
    <property type="match status" value="1"/>
</dbReference>
<dbReference type="Pfam" id="PF00535">
    <property type="entry name" value="Glycos_transf_2"/>
    <property type="match status" value="1"/>
</dbReference>
<dbReference type="SUPFAM" id="SSF53448">
    <property type="entry name" value="Nucleotide-diphospho-sugar transferases"/>
    <property type="match status" value="1"/>
</dbReference>
<accession>Q6GV29</accession>
<accession>Q2NKP4</accession>
<protein>
    <recommendedName>
        <fullName evidence="4">Queuosine-tRNA galactosyltransferase</fullName>
        <shortName evidence="4">QTGAL</shortName>
        <ecNumber evidence="2">2.4.1.-</ecNumber>
    </recommendedName>
    <alternativeName>
        <fullName>UDP-GlcNAc:betaGal beta-1,3-N-acetylglucosaminyltransferase-like protein 1</fullName>
        <shortName>BGnT-like protein 1</shortName>
        <shortName>Beta1,3-N-acetylglucosaminyltransferase-like protein 1</shortName>
        <shortName>Beta3Gn-T-like protein 1</shortName>
        <shortName>Beta3GnTL1</shortName>
    </alternativeName>
</protein>
<organism>
    <name type="scientific">Rattus norvegicus</name>
    <name type="common">Rat</name>
    <dbReference type="NCBI Taxonomy" id="10116"/>
    <lineage>
        <taxon>Eukaryota</taxon>
        <taxon>Metazoa</taxon>
        <taxon>Chordata</taxon>
        <taxon>Craniata</taxon>
        <taxon>Vertebrata</taxon>
        <taxon>Euteleostomi</taxon>
        <taxon>Mammalia</taxon>
        <taxon>Eutheria</taxon>
        <taxon>Euarchontoglires</taxon>
        <taxon>Glires</taxon>
        <taxon>Rodentia</taxon>
        <taxon>Myomorpha</taxon>
        <taxon>Muroidea</taxon>
        <taxon>Muridae</taxon>
        <taxon>Murinae</taxon>
        <taxon>Rattus</taxon>
    </lineage>
</organism>
<keyword id="KW-0025">Alternative splicing</keyword>
<keyword id="KW-0963">Cytoplasm</keyword>
<keyword id="KW-0328">Glycosyltransferase</keyword>
<keyword id="KW-1185">Reference proteome</keyword>
<keyword id="KW-0808">Transferase</keyword>
<comment type="function">
    <text evidence="1 2">Glycosyltransferase that specifically catalyzes galactosylation of cytoplasmic tRNA(Tyr) modified with queuosine at position 34 (queuosine(34)) (PubMed:37992713). Galactosylates the cyclopentene hydroxyl group of queuosine(34) in tRNA(Tyr) to form galactosyl-queuosine(34) (PubMed:37992713). Mannosylation of queuosine(34) in tRNA(Tyr) is required to slow-down elongation at cognate codons UAC and suppress stop codon readthrough, thereby regulating protein translation (By similarity).</text>
</comment>
<comment type="catalytic activity">
    <reaction evidence="2">
        <text>queuosine(34) in tRNA(Tyr) + UDP-alpha-D-galactose = O-5''-beta-D-galactosylqueuosine(34) in tRNA(Tyr) + UDP + H(+)</text>
        <dbReference type="Rhea" id="RHEA:78231"/>
        <dbReference type="Rhea" id="RHEA-COMP:19043"/>
        <dbReference type="Rhea" id="RHEA-COMP:19044"/>
        <dbReference type="ChEBI" id="CHEBI:15378"/>
        <dbReference type="ChEBI" id="CHEBI:58223"/>
        <dbReference type="ChEBI" id="CHEBI:66914"/>
        <dbReference type="ChEBI" id="CHEBI:194431"/>
        <dbReference type="ChEBI" id="CHEBI:228254"/>
    </reaction>
    <physiologicalReaction direction="left-to-right" evidence="2">
        <dbReference type="Rhea" id="RHEA:78232"/>
    </physiologicalReaction>
</comment>
<comment type="subcellular location">
    <subcellularLocation>
        <location evidence="1">Cytoplasm</location>
    </subcellularLocation>
</comment>
<comment type="alternative products">
    <event type="alternative splicing"/>
    <isoform>
        <id>Q6GV29-1</id>
        <name>1</name>
        <sequence type="displayed"/>
    </isoform>
    <isoform>
        <id>Q6GV29-2</id>
        <name>2</name>
        <sequence type="described" ref="VSP_025968"/>
    </isoform>
</comment>
<comment type="similarity">
    <text evidence="4">Belongs to the glycosyltransferase 2 family.</text>
</comment>
<reference key="1">
    <citation type="submission" date="2004-05" db="EMBL/GenBank/DDBJ databases">
        <authorList>
            <person name="Huang C.Q."/>
            <person name="Wu S.L."/>
            <person name="Zhou J.L."/>
        </authorList>
    </citation>
    <scope>NUCLEOTIDE SEQUENCE [MRNA] (ISOFORM 1)</scope>
    <source>
        <strain>Brown Norway/SsNHsd</strain>
    </source>
</reference>
<reference key="2">
    <citation type="journal article" date="2004" name="Genome Res.">
        <title>The status, quality, and expansion of the NIH full-length cDNA project: the Mammalian Gene Collection (MGC).</title>
        <authorList>
            <consortium name="The MGC Project Team"/>
        </authorList>
    </citation>
    <scope>NUCLEOTIDE SEQUENCE [LARGE SCALE MRNA] (ISOFORM 2)</scope>
    <source>
        <tissue>Thymus</tissue>
    </source>
</reference>
<reference key="3">
    <citation type="journal article" date="2023" name="Cell">
        <title>Glycosylated queuosines in tRNAs optimize translational rate and post-embryonic growth.</title>
        <authorList>
            <person name="Zhao X."/>
            <person name="Ma D."/>
            <person name="Ishiguro K."/>
            <person name="Saito H."/>
            <person name="Akichika S."/>
            <person name="Matsuzawa I."/>
            <person name="Mito M."/>
            <person name="Irie T."/>
            <person name="Ishibashi K."/>
            <person name="Wakabayashi K."/>
            <person name="Sakaguchi Y."/>
            <person name="Yokoyama T."/>
            <person name="Mishima Y."/>
            <person name="Shirouzu M."/>
            <person name="Iwasaki S."/>
            <person name="Suzuki T."/>
            <person name="Suzuki T."/>
        </authorList>
    </citation>
    <scope>FUNCTION</scope>
    <scope>CATALYTIC ACTIVITY</scope>
    <scope>IDENTIFICATION BY MASS SPECTROMETRY</scope>
</reference>
<gene>
    <name evidence="5" type="primary">B3gntl1</name>
    <name evidence="1" type="synonym">Qtgal</name>
</gene>
<sequence>MQLPEDATKRAPLALVSIILPVHNAEQWLDECLMSVLQQDFEGTMELSVFNDASKDKSRAIIEKWKVKLEDSGISVVIGGHDSPSPRGVGYSKNQAIAQSTGSYLCFLDSDDVMMPQRVRMQYEAAVQHPASIIGCQVRRDPPDSTERYTRWINQLTSDQLLTQVFTSHGPTVIMPTWFCSRAWFSHVGPFDEGGQGVPEDLLFFYEHLRKGGGVFRVDHSLLLYRYHLCAATHSVLEMTIWTHRVHFLEEQILPHWKSFTIWNAGKQGRKLYRSLTAASQHKVVAFCDIDKNKIRKGFYCHEDSQERPKPKVPILHFQAAQPPFVICVKLDLTGGEFEDNLKSLHLQEGRDFVHFS</sequence>